<sequence>MSEAVWHDGEDVVLRLYIQPKASRDKIVGLHGEELKIAITAPPVDGKANAHLTKFLAKQFKVAKGLVHIEKGELGRHKQIRIESPVQIPTEIKAII</sequence>
<evidence type="ECO:0000255" key="1">
    <source>
        <dbReference type="HAMAP-Rule" id="MF_00634"/>
    </source>
</evidence>
<dbReference type="EMBL" id="CP000789">
    <property type="protein sequence ID" value="ABU72516.1"/>
    <property type="molecule type" value="Genomic_DNA"/>
</dbReference>
<dbReference type="SMR" id="A7MZ92"/>
<dbReference type="KEGG" id="vha:VIBHAR_03581"/>
<dbReference type="PATRIC" id="fig|338187.25.peg.2629"/>
<dbReference type="Proteomes" id="UP000008152">
    <property type="component" value="Chromosome I"/>
</dbReference>
<dbReference type="GO" id="GO:0005737">
    <property type="term" value="C:cytoplasm"/>
    <property type="evidence" value="ECO:0007669"/>
    <property type="project" value="TreeGrafter"/>
</dbReference>
<dbReference type="Gene3D" id="3.30.1200.10">
    <property type="entry name" value="YggU-like"/>
    <property type="match status" value="1"/>
</dbReference>
<dbReference type="HAMAP" id="MF_00634">
    <property type="entry name" value="UPF0235"/>
    <property type="match status" value="1"/>
</dbReference>
<dbReference type="InterPro" id="IPR003746">
    <property type="entry name" value="DUF167"/>
</dbReference>
<dbReference type="InterPro" id="IPR036591">
    <property type="entry name" value="YggU-like_sf"/>
</dbReference>
<dbReference type="NCBIfam" id="TIGR00251">
    <property type="entry name" value="DUF167 family protein"/>
    <property type="match status" value="1"/>
</dbReference>
<dbReference type="NCBIfam" id="NF003466">
    <property type="entry name" value="PRK05090.1"/>
    <property type="match status" value="1"/>
</dbReference>
<dbReference type="PANTHER" id="PTHR13420">
    <property type="entry name" value="UPF0235 PROTEIN C15ORF40"/>
    <property type="match status" value="1"/>
</dbReference>
<dbReference type="PANTHER" id="PTHR13420:SF7">
    <property type="entry name" value="UPF0235 PROTEIN C15ORF40"/>
    <property type="match status" value="1"/>
</dbReference>
<dbReference type="Pfam" id="PF02594">
    <property type="entry name" value="DUF167"/>
    <property type="match status" value="1"/>
</dbReference>
<dbReference type="SMART" id="SM01152">
    <property type="entry name" value="DUF167"/>
    <property type="match status" value="1"/>
</dbReference>
<dbReference type="SUPFAM" id="SSF69786">
    <property type="entry name" value="YggU-like"/>
    <property type="match status" value="1"/>
</dbReference>
<organism>
    <name type="scientific">Vibrio campbellii (strain ATCC BAA-1116)</name>
    <dbReference type="NCBI Taxonomy" id="2902295"/>
    <lineage>
        <taxon>Bacteria</taxon>
        <taxon>Pseudomonadati</taxon>
        <taxon>Pseudomonadota</taxon>
        <taxon>Gammaproteobacteria</taxon>
        <taxon>Vibrionales</taxon>
        <taxon>Vibrionaceae</taxon>
        <taxon>Vibrio</taxon>
    </lineage>
</organism>
<accession>A7MZ92</accession>
<name>Y3581_VIBC1</name>
<protein>
    <recommendedName>
        <fullName evidence="1">UPF0235 protein VIBHAR_03581</fullName>
    </recommendedName>
</protein>
<reference key="1">
    <citation type="submission" date="2007-08" db="EMBL/GenBank/DDBJ databases">
        <authorList>
            <consortium name="The Vibrio harveyi Genome Sequencing Project"/>
            <person name="Bassler B."/>
            <person name="Clifton S.W."/>
            <person name="Fulton L."/>
            <person name="Delehaunty K."/>
            <person name="Fronick C."/>
            <person name="Harrison M."/>
            <person name="Markivic C."/>
            <person name="Fulton R."/>
            <person name="Tin-Wollam A.-M."/>
            <person name="Shah N."/>
            <person name="Pepin K."/>
            <person name="Nash W."/>
            <person name="Thiruvilangam P."/>
            <person name="Bhonagiri V."/>
            <person name="Waters C."/>
            <person name="Tu K.C."/>
            <person name="Irgon J."/>
            <person name="Wilson R.K."/>
        </authorList>
    </citation>
    <scope>NUCLEOTIDE SEQUENCE [LARGE SCALE GENOMIC DNA]</scope>
    <source>
        <strain>ATCC BAA-1116 / BB120</strain>
    </source>
</reference>
<gene>
    <name type="ordered locus">VIBHAR_03581</name>
</gene>
<feature type="chain" id="PRO_1000056795" description="UPF0235 protein VIBHAR_03581">
    <location>
        <begin position="1"/>
        <end position="96"/>
    </location>
</feature>
<proteinExistence type="inferred from homology"/>
<comment type="similarity">
    <text evidence="1">Belongs to the UPF0235 family.</text>
</comment>